<keyword id="KW-0963">Cytoplasm</keyword>
<keyword id="KW-0238">DNA-binding</keyword>
<keyword id="KW-1185">Reference proteome</keyword>
<keyword id="KW-0678">Repressor</keyword>
<keyword id="KW-0804">Transcription</keyword>
<keyword id="KW-0805">Transcription regulation</keyword>
<organism>
    <name type="scientific">Shigella sonnei (strain Ss046)</name>
    <dbReference type="NCBI Taxonomy" id="300269"/>
    <lineage>
        <taxon>Bacteria</taxon>
        <taxon>Pseudomonadati</taxon>
        <taxon>Pseudomonadota</taxon>
        <taxon>Gammaproteobacteria</taxon>
        <taxon>Enterobacterales</taxon>
        <taxon>Enterobacteriaceae</taxon>
        <taxon>Shigella</taxon>
    </lineage>
</organism>
<sequence>MTEAQRHQILLEMLAQLGFVTVEKVVERLGISPATARRDINKLDERGKLKKVRNGAEAITQQRPRWTPMNLHQAQNHDEKVRIAKAASQLVNPGESVVINCGSTAFLLGREMCGKPVQIITNYLPLANYLIDQEHDSVIIMGGQYNKSQSITLSPQGSENSLYAGHWMFTSGKGLTAEGLYKTDMLTAMAEQKMLSVVGKLVVLVDSSKIGERAGMLFSRADQIDMLITGKNANPEILQQLEAQGVSILRV</sequence>
<reference key="1">
    <citation type="journal article" date="2005" name="Nucleic Acids Res.">
        <title>Genome dynamics and diversity of Shigella species, the etiologic agents of bacillary dysentery.</title>
        <authorList>
            <person name="Yang F."/>
            <person name="Yang J."/>
            <person name="Zhang X."/>
            <person name="Chen L."/>
            <person name="Jiang Y."/>
            <person name="Yan Y."/>
            <person name="Tang X."/>
            <person name="Wang J."/>
            <person name="Xiong Z."/>
            <person name="Dong J."/>
            <person name="Xue Y."/>
            <person name="Zhu Y."/>
            <person name="Xu X."/>
            <person name="Sun L."/>
            <person name="Chen S."/>
            <person name="Nie H."/>
            <person name="Peng J."/>
            <person name="Xu J."/>
            <person name="Wang Y."/>
            <person name="Yuan Z."/>
            <person name="Wen Y."/>
            <person name="Yao Z."/>
            <person name="Shen Y."/>
            <person name="Qiang B."/>
            <person name="Hou Y."/>
            <person name="Yu J."/>
            <person name="Jin Q."/>
        </authorList>
    </citation>
    <scope>NUCLEOTIDE SEQUENCE [LARGE SCALE GENOMIC DNA]</scope>
    <source>
        <strain>Ss046</strain>
    </source>
</reference>
<gene>
    <name evidence="1" type="primary">ulaR</name>
    <name type="ordered locus">SSON_4373</name>
</gene>
<evidence type="ECO:0000255" key="1">
    <source>
        <dbReference type="HAMAP-Rule" id="MF_01563"/>
    </source>
</evidence>
<comment type="function">
    <text evidence="1">Represses ulaG and the ulaABCDEF operon.</text>
</comment>
<comment type="subcellular location">
    <subcellularLocation>
        <location evidence="1">Cytoplasm</location>
    </subcellularLocation>
</comment>
<proteinExistence type="inferred from homology"/>
<protein>
    <recommendedName>
        <fullName evidence="1">HTH-type transcriptional regulator UlaR</fullName>
    </recommendedName>
</protein>
<dbReference type="EMBL" id="CP000038">
    <property type="protein sequence ID" value="AAZ90856.1"/>
    <property type="molecule type" value="Genomic_DNA"/>
</dbReference>
<dbReference type="RefSeq" id="WP_000133625.1">
    <property type="nucleotide sequence ID" value="NC_007384.1"/>
</dbReference>
<dbReference type="SMR" id="Q3YUF6"/>
<dbReference type="GeneID" id="93777633"/>
<dbReference type="KEGG" id="ssn:SSON_4373"/>
<dbReference type="HOGENOM" id="CLU_060699_3_2_6"/>
<dbReference type="Proteomes" id="UP000002529">
    <property type="component" value="Chromosome"/>
</dbReference>
<dbReference type="GO" id="GO:0005737">
    <property type="term" value="C:cytoplasm"/>
    <property type="evidence" value="ECO:0007669"/>
    <property type="project" value="UniProtKB-SubCell"/>
</dbReference>
<dbReference type="GO" id="GO:0003677">
    <property type="term" value="F:DNA binding"/>
    <property type="evidence" value="ECO:0007669"/>
    <property type="project" value="UniProtKB-KW"/>
</dbReference>
<dbReference type="GO" id="GO:0003700">
    <property type="term" value="F:DNA-binding transcription factor activity"/>
    <property type="evidence" value="ECO:0007669"/>
    <property type="project" value="InterPro"/>
</dbReference>
<dbReference type="GO" id="GO:0045892">
    <property type="term" value="P:negative regulation of DNA-templated transcription"/>
    <property type="evidence" value="ECO:0007669"/>
    <property type="project" value="UniProtKB-UniRule"/>
</dbReference>
<dbReference type="FunFam" id="1.10.10.10:FF:000160">
    <property type="entry name" value="HTH-type transcriptional regulator UlaR"/>
    <property type="match status" value="1"/>
</dbReference>
<dbReference type="Gene3D" id="1.10.10.10">
    <property type="entry name" value="Winged helix-like DNA-binding domain superfamily/Winged helix DNA-binding domain"/>
    <property type="match status" value="1"/>
</dbReference>
<dbReference type="HAMAP" id="MF_01563">
    <property type="entry name" value="HTH_type_UlaR"/>
    <property type="match status" value="1"/>
</dbReference>
<dbReference type="InterPro" id="IPR050313">
    <property type="entry name" value="Carb_Metab_HTH_regulators"/>
</dbReference>
<dbReference type="InterPro" id="IPR014036">
    <property type="entry name" value="DeoR-like_C"/>
</dbReference>
<dbReference type="InterPro" id="IPR001034">
    <property type="entry name" value="DeoR_HTH"/>
</dbReference>
<dbReference type="InterPro" id="IPR037171">
    <property type="entry name" value="NagB/RpiA_transferase-like"/>
</dbReference>
<dbReference type="InterPro" id="IPR018356">
    <property type="entry name" value="Tscrpt_reg_HTH_DeoR_CS"/>
</dbReference>
<dbReference type="InterPro" id="IPR023711">
    <property type="entry name" value="Tscrpt_reg_HTH_UlaR"/>
</dbReference>
<dbReference type="InterPro" id="IPR036388">
    <property type="entry name" value="WH-like_DNA-bd_sf"/>
</dbReference>
<dbReference type="InterPro" id="IPR036390">
    <property type="entry name" value="WH_DNA-bd_sf"/>
</dbReference>
<dbReference type="NCBIfam" id="NF010034">
    <property type="entry name" value="PRK13509.1"/>
    <property type="match status" value="1"/>
</dbReference>
<dbReference type="PANTHER" id="PTHR30363">
    <property type="entry name" value="HTH-TYPE TRANSCRIPTIONAL REGULATOR SRLR-RELATED"/>
    <property type="match status" value="1"/>
</dbReference>
<dbReference type="PANTHER" id="PTHR30363:SF55">
    <property type="entry name" value="HTH-TYPE TRANSCRIPTIONAL REGULATOR ULAR"/>
    <property type="match status" value="1"/>
</dbReference>
<dbReference type="Pfam" id="PF00455">
    <property type="entry name" value="DeoRC"/>
    <property type="match status" value="1"/>
</dbReference>
<dbReference type="Pfam" id="PF08220">
    <property type="entry name" value="HTH_DeoR"/>
    <property type="match status" value="1"/>
</dbReference>
<dbReference type="PRINTS" id="PR00037">
    <property type="entry name" value="HTHLACR"/>
</dbReference>
<dbReference type="SMART" id="SM01134">
    <property type="entry name" value="DeoRC"/>
    <property type="match status" value="1"/>
</dbReference>
<dbReference type="SMART" id="SM00420">
    <property type="entry name" value="HTH_DEOR"/>
    <property type="match status" value="1"/>
</dbReference>
<dbReference type="SUPFAM" id="SSF100950">
    <property type="entry name" value="NagB/RpiA/CoA transferase-like"/>
    <property type="match status" value="1"/>
</dbReference>
<dbReference type="SUPFAM" id="SSF46785">
    <property type="entry name" value="Winged helix' DNA-binding domain"/>
    <property type="match status" value="1"/>
</dbReference>
<dbReference type="PROSITE" id="PS00894">
    <property type="entry name" value="HTH_DEOR_1"/>
    <property type="match status" value="1"/>
</dbReference>
<dbReference type="PROSITE" id="PS51000">
    <property type="entry name" value="HTH_DEOR_2"/>
    <property type="match status" value="1"/>
</dbReference>
<accession>Q3YUF6</accession>
<name>ULAR_SHISS</name>
<feature type="chain" id="PRO_0000234029" description="HTH-type transcriptional regulator UlaR">
    <location>
        <begin position="1"/>
        <end position="251"/>
    </location>
</feature>
<feature type="domain" description="HTH deoR-type" evidence="1">
    <location>
        <begin position="3"/>
        <end position="58"/>
    </location>
</feature>
<feature type="DNA-binding region" description="H-T-H motif" evidence="1">
    <location>
        <begin position="20"/>
        <end position="39"/>
    </location>
</feature>